<reference key="1">
    <citation type="journal article" date="2005" name="J. Bacteriol.">
        <title>The genome of Sulfolobus acidocaldarius, a model organism of the Crenarchaeota.</title>
        <authorList>
            <person name="Chen L."/>
            <person name="Bruegger K."/>
            <person name="Skovgaard M."/>
            <person name="Redder P."/>
            <person name="She Q."/>
            <person name="Torarinsson E."/>
            <person name="Greve B."/>
            <person name="Awayez M."/>
            <person name="Zibat A."/>
            <person name="Klenk H.-P."/>
            <person name="Garrett R.A."/>
        </authorList>
    </citation>
    <scope>NUCLEOTIDE SEQUENCE [LARGE SCALE GENOMIC DNA]</scope>
    <source>
        <strain>ATCC 33909 / DSM 639 / JCM 8929 / NBRC 15157 / NCIMB 11770</strain>
    </source>
</reference>
<reference key="2">
    <citation type="journal article" date="2017" name="Mol. Microbiol.">
        <title>ArnS, a kinase involved in starvation-induced archaellum expression.</title>
        <authorList>
            <person name="Haurat M.F."/>
            <person name="Figueiredo A.S."/>
            <person name="Hoffmann L."/>
            <person name="Li L."/>
            <person name="Herr K."/>
            <person name="Wilson A.J."/>
            <person name="Beeby M."/>
            <person name="Schaber J."/>
            <person name="Albers S.-V."/>
        </authorList>
    </citation>
    <scope>FUNCTION</scope>
    <scope>CATALYTIC ACTIVITY</scope>
    <scope>ACTIVITY REGULATION</scope>
    <scope>INDUCTION</scope>
    <scope>AUTOPHOSPHORYLATION</scope>
    <scope>DISRUPTION PHENOTYPE</scope>
    <scope>MUTAGENESIS OF LYS-344</scope>
    <source>
        <strain>ATCC 33909 / DSM 639 / JCM 8929 / NBRC 15157 / NCIMB 11770</strain>
    </source>
</reference>
<keyword id="KW-0067">ATP-binding</keyword>
<keyword id="KW-1003">Cell membrane</keyword>
<keyword id="KW-0418">Kinase</keyword>
<keyword id="KW-0472">Membrane</keyword>
<keyword id="KW-0547">Nucleotide-binding</keyword>
<keyword id="KW-0597">Phosphoprotein</keyword>
<keyword id="KW-1185">Reference proteome</keyword>
<keyword id="KW-0723">Serine/threonine-protein kinase</keyword>
<keyword id="KW-0346">Stress response</keyword>
<keyword id="KW-0808">Transferase</keyword>
<keyword id="KW-0812">Transmembrane</keyword>
<keyword id="KW-1133">Transmembrane helix</keyword>
<feature type="chain" id="PRO_0000439510" description="Serine/threonine-protein kinase ArnS">
    <location>
        <begin position="1"/>
        <end position="623"/>
    </location>
</feature>
<feature type="transmembrane region" description="Helical" evidence="1">
    <location>
        <begin position="13"/>
        <end position="33"/>
    </location>
</feature>
<feature type="transmembrane region" description="Helical" evidence="1">
    <location>
        <begin position="49"/>
        <end position="69"/>
    </location>
</feature>
<feature type="domain" description="Protein kinase" evidence="2">
    <location>
        <begin position="317"/>
        <end position="623"/>
    </location>
</feature>
<feature type="active site" description="Proton acceptor" evidence="2">
    <location>
        <position position="460"/>
    </location>
</feature>
<feature type="binding site" evidence="2">
    <location>
        <begin position="323"/>
        <end position="331"/>
    </location>
    <ligand>
        <name>ATP</name>
        <dbReference type="ChEBI" id="CHEBI:30616"/>
    </ligand>
</feature>
<feature type="binding site" evidence="2">
    <location>
        <position position="344"/>
    </location>
    <ligand>
        <name>ATP</name>
        <dbReference type="ChEBI" id="CHEBI:30616"/>
    </ligand>
</feature>
<feature type="mutagenesis site" description="Abolishes autophosphorylation." evidence="3">
    <original>K</original>
    <variation>A</variation>
    <location>
        <position position="344"/>
    </location>
</feature>
<proteinExistence type="evidence at protein level"/>
<gene>
    <name evidence="4" type="primary">arnS</name>
    <name evidence="6" type="ordered locus">Saci_1181</name>
</gene>
<dbReference type="EC" id="2.7.11.1" evidence="3"/>
<dbReference type="EMBL" id="CP000077">
    <property type="protein sequence ID" value="AAY80528.1"/>
    <property type="molecule type" value="Genomic_DNA"/>
</dbReference>
<dbReference type="SMR" id="Q4J9K4"/>
<dbReference type="STRING" id="330779.Saci_1181"/>
<dbReference type="KEGG" id="sai:Saci_1181"/>
<dbReference type="PATRIC" id="fig|330779.12.peg.1145"/>
<dbReference type="eggNOG" id="arCOG03682">
    <property type="taxonomic scope" value="Archaea"/>
</dbReference>
<dbReference type="HOGENOM" id="CLU_446654_0_0_2"/>
<dbReference type="Proteomes" id="UP000001018">
    <property type="component" value="Chromosome"/>
</dbReference>
<dbReference type="GO" id="GO:0005737">
    <property type="term" value="C:cytoplasm"/>
    <property type="evidence" value="ECO:0007669"/>
    <property type="project" value="TreeGrafter"/>
</dbReference>
<dbReference type="GO" id="GO:0005886">
    <property type="term" value="C:plasma membrane"/>
    <property type="evidence" value="ECO:0007669"/>
    <property type="project" value="UniProtKB-SubCell"/>
</dbReference>
<dbReference type="GO" id="GO:0005524">
    <property type="term" value="F:ATP binding"/>
    <property type="evidence" value="ECO:0007669"/>
    <property type="project" value="UniProtKB-KW"/>
</dbReference>
<dbReference type="GO" id="GO:0106310">
    <property type="term" value="F:protein serine kinase activity"/>
    <property type="evidence" value="ECO:0007669"/>
    <property type="project" value="RHEA"/>
</dbReference>
<dbReference type="GO" id="GO:0004674">
    <property type="term" value="F:protein serine/threonine kinase activity"/>
    <property type="evidence" value="ECO:0007669"/>
    <property type="project" value="UniProtKB-KW"/>
</dbReference>
<dbReference type="CDD" id="cd14014">
    <property type="entry name" value="STKc_PknB_like"/>
    <property type="match status" value="1"/>
</dbReference>
<dbReference type="Gene3D" id="3.30.200.20">
    <property type="entry name" value="Phosphorylase Kinase, domain 1"/>
    <property type="match status" value="1"/>
</dbReference>
<dbReference type="Gene3D" id="1.10.510.10">
    <property type="entry name" value="Transferase(Phosphotransferase) domain 1"/>
    <property type="match status" value="1"/>
</dbReference>
<dbReference type="InterPro" id="IPR011009">
    <property type="entry name" value="Kinase-like_dom_sf"/>
</dbReference>
<dbReference type="InterPro" id="IPR000719">
    <property type="entry name" value="Prot_kinase_dom"/>
</dbReference>
<dbReference type="InterPro" id="IPR017441">
    <property type="entry name" value="Protein_kinase_ATP_BS"/>
</dbReference>
<dbReference type="InterPro" id="IPR008271">
    <property type="entry name" value="Ser/Thr_kinase_AS"/>
</dbReference>
<dbReference type="PANTHER" id="PTHR44167">
    <property type="entry name" value="OVARIAN-SPECIFIC SERINE/THREONINE-PROTEIN KINASE LOK-RELATED"/>
    <property type="match status" value="1"/>
</dbReference>
<dbReference type="PANTHER" id="PTHR44167:SF24">
    <property type="entry name" value="SERINE_THREONINE-PROTEIN KINASE CHK2"/>
    <property type="match status" value="1"/>
</dbReference>
<dbReference type="Pfam" id="PF00069">
    <property type="entry name" value="Pkinase"/>
    <property type="match status" value="1"/>
</dbReference>
<dbReference type="SMART" id="SM00220">
    <property type="entry name" value="S_TKc"/>
    <property type="match status" value="1"/>
</dbReference>
<dbReference type="SUPFAM" id="SSF56112">
    <property type="entry name" value="Protein kinase-like (PK-like)"/>
    <property type="match status" value="1"/>
</dbReference>
<dbReference type="PROSITE" id="PS00107">
    <property type="entry name" value="PROTEIN_KINASE_ATP"/>
    <property type="match status" value="1"/>
</dbReference>
<dbReference type="PROSITE" id="PS50011">
    <property type="entry name" value="PROTEIN_KINASE_DOM"/>
    <property type="match status" value="1"/>
</dbReference>
<dbReference type="PROSITE" id="PS00108">
    <property type="entry name" value="PROTEIN_KINASE_ST"/>
    <property type="match status" value="1"/>
</dbReference>
<organism>
    <name type="scientific">Sulfolobus acidocaldarius (strain ATCC 33909 / DSM 639 / JCM 8929 / NBRC 15157 / NCIMB 11770)</name>
    <dbReference type="NCBI Taxonomy" id="330779"/>
    <lineage>
        <taxon>Archaea</taxon>
        <taxon>Thermoproteota</taxon>
        <taxon>Thermoprotei</taxon>
        <taxon>Sulfolobales</taxon>
        <taxon>Sulfolobaceae</taxon>
        <taxon>Sulfolobus</taxon>
    </lineage>
</organism>
<protein>
    <recommendedName>
        <fullName evidence="4">Serine/threonine-protein kinase ArnS</fullName>
        <shortName evidence="4">Ser/Thr protein kinase ArnS</shortName>
        <ecNumber evidence="3">2.7.11.1</ecNumber>
    </recommendedName>
    <alternativeName>
        <fullName evidence="5">Archaellum regulatory network protein ArnS</fullName>
    </alternativeName>
</protein>
<comment type="function">
    <text evidence="3">Plays an essential role in the controlled expression of archaellum components during starvation-induced motility. May inhibit arnR transcription and promote ArnR translation.</text>
</comment>
<comment type="catalytic activity">
    <reaction evidence="3">
        <text>L-seryl-[protein] + ATP = O-phospho-L-seryl-[protein] + ADP + H(+)</text>
        <dbReference type="Rhea" id="RHEA:17989"/>
        <dbReference type="Rhea" id="RHEA-COMP:9863"/>
        <dbReference type="Rhea" id="RHEA-COMP:11604"/>
        <dbReference type="ChEBI" id="CHEBI:15378"/>
        <dbReference type="ChEBI" id="CHEBI:29999"/>
        <dbReference type="ChEBI" id="CHEBI:30616"/>
        <dbReference type="ChEBI" id="CHEBI:83421"/>
        <dbReference type="ChEBI" id="CHEBI:456216"/>
        <dbReference type="EC" id="2.7.11.1"/>
    </reaction>
</comment>
<comment type="catalytic activity">
    <reaction evidence="3">
        <text>L-threonyl-[protein] + ATP = O-phospho-L-threonyl-[protein] + ADP + H(+)</text>
        <dbReference type="Rhea" id="RHEA:46608"/>
        <dbReference type="Rhea" id="RHEA-COMP:11060"/>
        <dbReference type="Rhea" id="RHEA-COMP:11605"/>
        <dbReference type="ChEBI" id="CHEBI:15378"/>
        <dbReference type="ChEBI" id="CHEBI:30013"/>
        <dbReference type="ChEBI" id="CHEBI:30616"/>
        <dbReference type="ChEBI" id="CHEBI:61977"/>
        <dbReference type="ChEBI" id="CHEBI:456216"/>
        <dbReference type="EC" id="2.7.11.1"/>
    </reaction>
</comment>
<comment type="activity regulation">
    <text evidence="3">Autophosphorylation is stimulated by Mn(2+).</text>
</comment>
<comment type="subcellular location">
    <subcellularLocation>
        <location evidence="5">Cell membrane</location>
        <topology evidence="1">Multi-pass membrane protein</topology>
    </subcellularLocation>
</comment>
<comment type="induction">
    <text evidence="3">Induced during starvation conditions.</text>
</comment>
<comment type="PTM">
    <text evidence="3">Autophosphorylated.</text>
</comment>
<comment type="disruption phenotype">
    <text evidence="3">Deletion results in dysregulation of the archaellum regulatory network that leads to reduced motility, though the archaellum is properly assembled. Deletion mutant is still able to sense starvation and to induce archaellum formation, but with a delay at the signal transduction cascade level.</text>
</comment>
<comment type="similarity">
    <text evidence="2">Belongs to the protein kinase superfamily. Ser/Thr protein kinase family.</text>
</comment>
<name>ARNS_SULAC</name>
<evidence type="ECO:0000255" key="1"/>
<evidence type="ECO:0000255" key="2">
    <source>
        <dbReference type="PROSITE-ProRule" id="PRU00159"/>
    </source>
</evidence>
<evidence type="ECO:0000269" key="3">
    <source>
    </source>
</evidence>
<evidence type="ECO:0000303" key="4">
    <source>
    </source>
</evidence>
<evidence type="ECO:0000305" key="5"/>
<evidence type="ECO:0000312" key="6">
    <source>
        <dbReference type="EMBL" id="AAY80528.1"/>
    </source>
</evidence>
<accession>Q4J9K4</accession>
<sequence>MLMSFILLISTSMILISVFSYVLIALIVLGIVLSLISLLSPRVSYVSSVYLIGLTVYLNPGFSLTQSLINTVPILGEINMLSGLLKTPVTSIISSLFSLALLNLGIKGYEIYLSKHADIVKLDSIIFSQHGLPKQANWNIVVNSEVKLLKSNEKLILSNTPEAKYELCPTLVDHKYYVPNKVTGLAFEGEVIRINYSPVDGVPYEKFRNCFTVFEVEGLPPDTSFVIEINGASLKLKDRKFAKLSLEPLYWKVNEIRISREDEEEIYEPDIKEGLTFRGGTVKINFRRKVIRYKTAKIPSIENWDPGIWVGQEVYGYRVIEVIGLGGNGYVMKVEKNGLLYAMKVLSVNKFTNSLEHFDNLLKESENLEKLSKDPRLVSIYGSFVDKNNIQSALAGDYTSYYKYPPAIIMEFMEGGTLFDLISRVDLVQSKYWQYIVKLVIKEIAKALTFLHKRGYVHLDVKPQNIFLKEKINGEPEVVYKILSSTPGIIKLGDLGSAVRVGEKITQATPAYSPPEQIEAVITGKGAQPSMDNYALGVTLYKLLTMKNLDYVNYLDKAFDEYIKGDPSIAMKYINMAKMSMVNFKPKLPHNTLPELANVVQGTLVVDPKRRLTSYDIVKILEG</sequence>